<protein>
    <recommendedName>
        <fullName>Mucin-20</fullName>
        <shortName>MUC-20</shortName>
    </recommendedName>
</protein>
<evidence type="ECO:0000250" key="1"/>
<evidence type="ECO:0000255" key="2"/>
<evidence type="ECO:0000256" key="3">
    <source>
        <dbReference type="SAM" id="MobiDB-lite"/>
    </source>
</evidence>
<evidence type="ECO:0000269" key="4">
    <source>
    </source>
</evidence>
<evidence type="ECO:0000305" key="5"/>
<sequence length="656" mass="68720">MGSVWGLAVPLLVFCWKVGVSVSSPGLDISRSVPLVTTNNMEVSTFTQRDRPSSERAFQTTNLIQYVPLDTQTLSTESASNALSATSISSEVNSRDTQTTSFVTKTRKTHTTTPAASSLEAQTTSPNLSTLNIQITSPIASSLDAQTIFPVSLSLSTQTTSPAPSFLDTQTTSPEPSSLTTSPAPSSLITSPTPSSLTTSPAPSFLDTQTTSPAPSSLTTSPAPSSLDTQTISPIELTLKTQTISTVTETRTVSIRIPSDLTVMHTIPTETLAPSNSPRTGMSTVQTGTVWDSIEAVFDTLCTDDSSEEARKITVDLLTLAHTSTEVEYLSSESSSSSDSSAGVLSSSRVLGPDSATPAKGLVAFNITHIKLSNCITEIETTITISGAPGASLSPTEATAALFTSEILTLPPPTEAKPIFPETTSLSGILSTAGTPALATTLEGTVSTSAITESETAVAQTLTSVGTSVTVRRNPLENTSTLSIETQSHTEVLGTITVPMVAGSTMGEAASFVSFTALDSSSLSVVVTTESSATSETLTTGNTTNSSFLTESHPPFSIYSTTASTSKNPNITLTKTTASPKPPTHPTTSASTAWIRKTTKHDPGEDGGFLLVRLTVASPKDLTEHNAREKLMNQLRRELHARMPLVHMSFLSIRRG</sequence>
<reference key="1">
    <citation type="journal article" date="2004" name="J. Biol. Chem.">
        <title>Molecular cloning, genomic structure, and expression analysis of MUC20, a novel mucin protein, up-regulated in injured kidney.</title>
        <authorList>
            <person name="Higuchi T."/>
            <person name="Orita T."/>
            <person name="Nakanishi S."/>
            <person name="Katsuya K."/>
            <person name="Watanabe H."/>
            <person name="Yamasaki Y."/>
            <person name="Waga I."/>
            <person name="Nanayama T."/>
            <person name="Yamamoto Y."/>
            <person name="Munger W."/>
            <person name="Sun H.-W."/>
            <person name="Falk R.J."/>
            <person name="Jennette J.C."/>
            <person name="Alcorta D.A."/>
            <person name="Li H."/>
            <person name="Yamamoto T."/>
            <person name="Saito Y."/>
            <person name="Nakamura M."/>
        </authorList>
    </citation>
    <scope>NUCLEOTIDE SEQUENCE [MRNA]</scope>
    <scope>TISSUE SPECIFICITY</scope>
    <source>
        <tissue>Kidney</tissue>
    </source>
</reference>
<reference key="2">
    <citation type="journal article" date="2005" name="Science">
        <title>The transcriptional landscape of the mammalian genome.</title>
        <authorList>
            <person name="Carninci P."/>
            <person name="Kasukawa T."/>
            <person name="Katayama S."/>
            <person name="Gough J."/>
            <person name="Frith M.C."/>
            <person name="Maeda N."/>
            <person name="Oyama R."/>
            <person name="Ravasi T."/>
            <person name="Lenhard B."/>
            <person name="Wells C."/>
            <person name="Kodzius R."/>
            <person name="Shimokawa K."/>
            <person name="Bajic V.B."/>
            <person name="Brenner S.E."/>
            <person name="Batalov S."/>
            <person name="Forrest A.R."/>
            <person name="Zavolan M."/>
            <person name="Davis M.J."/>
            <person name="Wilming L.G."/>
            <person name="Aidinis V."/>
            <person name="Allen J.E."/>
            <person name="Ambesi-Impiombato A."/>
            <person name="Apweiler R."/>
            <person name="Aturaliya R.N."/>
            <person name="Bailey T.L."/>
            <person name="Bansal M."/>
            <person name="Baxter L."/>
            <person name="Beisel K.W."/>
            <person name="Bersano T."/>
            <person name="Bono H."/>
            <person name="Chalk A.M."/>
            <person name="Chiu K.P."/>
            <person name="Choudhary V."/>
            <person name="Christoffels A."/>
            <person name="Clutterbuck D.R."/>
            <person name="Crowe M.L."/>
            <person name="Dalla E."/>
            <person name="Dalrymple B.P."/>
            <person name="de Bono B."/>
            <person name="Della Gatta G."/>
            <person name="di Bernardo D."/>
            <person name="Down T."/>
            <person name="Engstrom P."/>
            <person name="Fagiolini M."/>
            <person name="Faulkner G."/>
            <person name="Fletcher C.F."/>
            <person name="Fukushima T."/>
            <person name="Furuno M."/>
            <person name="Futaki S."/>
            <person name="Gariboldi M."/>
            <person name="Georgii-Hemming P."/>
            <person name="Gingeras T.R."/>
            <person name="Gojobori T."/>
            <person name="Green R.E."/>
            <person name="Gustincich S."/>
            <person name="Harbers M."/>
            <person name="Hayashi Y."/>
            <person name="Hensch T.K."/>
            <person name="Hirokawa N."/>
            <person name="Hill D."/>
            <person name="Huminiecki L."/>
            <person name="Iacono M."/>
            <person name="Ikeo K."/>
            <person name="Iwama A."/>
            <person name="Ishikawa T."/>
            <person name="Jakt M."/>
            <person name="Kanapin A."/>
            <person name="Katoh M."/>
            <person name="Kawasawa Y."/>
            <person name="Kelso J."/>
            <person name="Kitamura H."/>
            <person name="Kitano H."/>
            <person name="Kollias G."/>
            <person name="Krishnan S.P."/>
            <person name="Kruger A."/>
            <person name="Kummerfeld S.K."/>
            <person name="Kurochkin I.V."/>
            <person name="Lareau L.F."/>
            <person name="Lazarevic D."/>
            <person name="Lipovich L."/>
            <person name="Liu J."/>
            <person name="Liuni S."/>
            <person name="McWilliam S."/>
            <person name="Madan Babu M."/>
            <person name="Madera M."/>
            <person name="Marchionni L."/>
            <person name="Matsuda H."/>
            <person name="Matsuzawa S."/>
            <person name="Miki H."/>
            <person name="Mignone F."/>
            <person name="Miyake S."/>
            <person name="Morris K."/>
            <person name="Mottagui-Tabar S."/>
            <person name="Mulder N."/>
            <person name="Nakano N."/>
            <person name="Nakauchi H."/>
            <person name="Ng P."/>
            <person name="Nilsson R."/>
            <person name="Nishiguchi S."/>
            <person name="Nishikawa S."/>
            <person name="Nori F."/>
            <person name="Ohara O."/>
            <person name="Okazaki Y."/>
            <person name="Orlando V."/>
            <person name="Pang K.C."/>
            <person name="Pavan W.J."/>
            <person name="Pavesi G."/>
            <person name="Pesole G."/>
            <person name="Petrovsky N."/>
            <person name="Piazza S."/>
            <person name="Reed J."/>
            <person name="Reid J.F."/>
            <person name="Ring B.Z."/>
            <person name="Ringwald M."/>
            <person name="Rost B."/>
            <person name="Ruan Y."/>
            <person name="Salzberg S.L."/>
            <person name="Sandelin A."/>
            <person name="Schneider C."/>
            <person name="Schoenbach C."/>
            <person name="Sekiguchi K."/>
            <person name="Semple C.A."/>
            <person name="Seno S."/>
            <person name="Sessa L."/>
            <person name="Sheng Y."/>
            <person name="Shibata Y."/>
            <person name="Shimada H."/>
            <person name="Shimada K."/>
            <person name="Silva D."/>
            <person name="Sinclair B."/>
            <person name="Sperling S."/>
            <person name="Stupka E."/>
            <person name="Sugiura K."/>
            <person name="Sultana R."/>
            <person name="Takenaka Y."/>
            <person name="Taki K."/>
            <person name="Tammoja K."/>
            <person name="Tan S.L."/>
            <person name="Tang S."/>
            <person name="Taylor M.S."/>
            <person name="Tegner J."/>
            <person name="Teichmann S.A."/>
            <person name="Ueda H.R."/>
            <person name="van Nimwegen E."/>
            <person name="Verardo R."/>
            <person name="Wei C.L."/>
            <person name="Yagi K."/>
            <person name="Yamanishi H."/>
            <person name="Zabarovsky E."/>
            <person name="Zhu S."/>
            <person name="Zimmer A."/>
            <person name="Hide W."/>
            <person name="Bult C."/>
            <person name="Grimmond S.M."/>
            <person name="Teasdale R.D."/>
            <person name="Liu E.T."/>
            <person name="Brusic V."/>
            <person name="Quackenbush J."/>
            <person name="Wahlestedt C."/>
            <person name="Mattick J.S."/>
            <person name="Hume D.A."/>
            <person name="Kai C."/>
            <person name="Sasaki D."/>
            <person name="Tomaru Y."/>
            <person name="Fukuda S."/>
            <person name="Kanamori-Katayama M."/>
            <person name="Suzuki M."/>
            <person name="Aoki J."/>
            <person name="Arakawa T."/>
            <person name="Iida J."/>
            <person name="Imamura K."/>
            <person name="Itoh M."/>
            <person name="Kato T."/>
            <person name="Kawaji H."/>
            <person name="Kawagashira N."/>
            <person name="Kawashima T."/>
            <person name="Kojima M."/>
            <person name="Kondo S."/>
            <person name="Konno H."/>
            <person name="Nakano K."/>
            <person name="Ninomiya N."/>
            <person name="Nishio T."/>
            <person name="Okada M."/>
            <person name="Plessy C."/>
            <person name="Shibata K."/>
            <person name="Shiraki T."/>
            <person name="Suzuki S."/>
            <person name="Tagami M."/>
            <person name="Waki K."/>
            <person name="Watahiki A."/>
            <person name="Okamura-Oho Y."/>
            <person name="Suzuki H."/>
            <person name="Kawai J."/>
            <person name="Hayashizaki Y."/>
        </authorList>
    </citation>
    <scope>NUCLEOTIDE SEQUENCE [LARGE SCALE MRNA]</scope>
    <source>
        <strain>C57BL/6J</strain>
        <tissue>Kidney</tissue>
    </source>
</reference>
<reference key="3">
    <citation type="journal article" date="2004" name="Genome Res.">
        <title>The status, quality, and expansion of the NIH full-length cDNA project: the Mammalian Gene Collection (MGC).</title>
        <authorList>
            <consortium name="The MGC Project Team"/>
        </authorList>
    </citation>
    <scope>NUCLEOTIDE SEQUENCE [LARGE SCALE MRNA]</scope>
    <source>
        <tissue>Mammary tumor</tissue>
    </source>
</reference>
<reference key="4">
    <citation type="journal article" date="2004" name="Mol. Cell. Biol.">
        <title>MUC20 suppresses the hepatocyte growth factor-induced Grb2-Ras pathway by binding to a multifunctional docking site of met.</title>
        <authorList>
            <person name="Higuchi T."/>
            <person name="Orita T."/>
            <person name="Katsuya K."/>
            <person name="Yamasaki Y."/>
            <person name="Akiyama K."/>
            <person name="Li H."/>
            <person name="Yamamoto T."/>
            <person name="Saito Y."/>
            <person name="Nakamura M."/>
        </authorList>
    </citation>
    <scope>INTERACTION WITH MET</scope>
</reference>
<organism>
    <name type="scientific">Mus musculus</name>
    <name type="common">Mouse</name>
    <dbReference type="NCBI Taxonomy" id="10090"/>
    <lineage>
        <taxon>Eukaryota</taxon>
        <taxon>Metazoa</taxon>
        <taxon>Chordata</taxon>
        <taxon>Craniata</taxon>
        <taxon>Vertebrata</taxon>
        <taxon>Euteleostomi</taxon>
        <taxon>Mammalia</taxon>
        <taxon>Eutheria</taxon>
        <taxon>Euarchontoglires</taxon>
        <taxon>Glires</taxon>
        <taxon>Rodentia</taxon>
        <taxon>Myomorpha</taxon>
        <taxon>Muroidea</taxon>
        <taxon>Muridae</taxon>
        <taxon>Murinae</taxon>
        <taxon>Mus</taxon>
        <taxon>Mus</taxon>
    </lineage>
</organism>
<name>MUC20_MOUSE</name>
<comment type="function">
    <text evidence="1">May regulate MET signaling cascade. Seems to decrease hepatocyte growth factor (HGF)-induced transient MAPK activation. Blocks GRB2 recruitment to MET thus suppressing the GRB2-RAS pathway. Inhibits HGF-induced proliferation of MMP1 and MMP9 expression (By similarity).</text>
</comment>
<comment type="subunit">
    <text evidence="1">Interacts with MET; oligomerization increases affinity for MET.</text>
</comment>
<comment type="subcellular location">
    <subcellularLocation>
        <location evidence="5">Secreted</location>
    </subcellularLocation>
    <subcellularLocation>
        <location evidence="1">Apical cell membrane</location>
    </subcellularLocation>
    <subcellularLocation>
        <location evidence="1">Basolateral cell membrane</location>
    </subcellularLocation>
    <subcellularLocation>
        <location evidence="1">Cell projection</location>
        <location evidence="1">Microvillus membrane</location>
    </subcellularLocation>
</comment>
<comment type="tissue specificity">
    <text evidence="4">Highly expressed in kidney. Up-regulated in renal tissues during renal injury.</text>
</comment>
<comment type="sequence caution" evidence="5">
    <conflict type="erroneous initiation">
        <sequence resource="EMBL-CDS" id="AAH26367"/>
    </conflict>
</comment>
<comment type="online information" name="Mucin database">
    <link uri="http://www.medkem.gu.se/mucinbiology/databases/"/>
</comment>
<accession>Q8BUE7</accession>
<accession>Q76I84</accession>
<accession>Q8R0X0</accession>
<dbReference type="EMBL" id="AB098732">
    <property type="protein sequence ID" value="BAD06719.1"/>
    <property type="molecule type" value="mRNA"/>
</dbReference>
<dbReference type="EMBL" id="AK085640">
    <property type="protein sequence ID" value="BAC39492.1"/>
    <property type="molecule type" value="mRNA"/>
</dbReference>
<dbReference type="EMBL" id="AK165477">
    <property type="protein sequence ID" value="BAE38212.1"/>
    <property type="molecule type" value="mRNA"/>
</dbReference>
<dbReference type="EMBL" id="BC026367">
    <property type="protein sequence ID" value="AAH26367.1"/>
    <property type="status" value="ALT_INIT"/>
    <property type="molecule type" value="mRNA"/>
</dbReference>
<dbReference type="CCDS" id="CCDS49830.1"/>
<dbReference type="RefSeq" id="NP_001139346.1">
    <property type="nucleotide sequence ID" value="NM_001145874.1"/>
</dbReference>
<dbReference type="RefSeq" id="NP_666183.2">
    <property type="nucleotide sequence ID" value="NM_146071.2"/>
</dbReference>
<dbReference type="BioGRID" id="230247">
    <property type="interactions" value="1"/>
</dbReference>
<dbReference type="FunCoup" id="Q8BUE7">
    <property type="interactions" value="32"/>
</dbReference>
<dbReference type="STRING" id="10090.ENSMUSP00000110769"/>
<dbReference type="GlyCosmos" id="Q8BUE7">
    <property type="glycosylation" value="2 sites, No reported glycans"/>
</dbReference>
<dbReference type="GlyGen" id="Q8BUE7">
    <property type="glycosylation" value="4 sites"/>
</dbReference>
<dbReference type="iPTMnet" id="Q8BUE7"/>
<dbReference type="PhosphoSitePlus" id="Q8BUE7"/>
<dbReference type="PaxDb" id="10090-ENSMUSP00000110769"/>
<dbReference type="ProteomicsDB" id="287524"/>
<dbReference type="Antibodypedia" id="35139">
    <property type="antibodies" value="199 antibodies from 24 providers"/>
</dbReference>
<dbReference type="DNASU" id="224116"/>
<dbReference type="Ensembl" id="ENSMUST00000041123.9">
    <property type="protein sequence ID" value="ENSMUSP00000041221.9"/>
    <property type="gene ID" value="ENSMUSG00000035638.15"/>
</dbReference>
<dbReference type="GeneID" id="224116"/>
<dbReference type="KEGG" id="mmu:224116"/>
<dbReference type="UCSC" id="uc007yzi.2">
    <property type="organism name" value="mouse"/>
</dbReference>
<dbReference type="AGR" id="MGI:2385039"/>
<dbReference type="CTD" id="200958"/>
<dbReference type="MGI" id="MGI:2385039">
    <property type="gene designation" value="Muc20"/>
</dbReference>
<dbReference type="VEuPathDB" id="HostDB:ENSMUSG00000035638"/>
<dbReference type="eggNOG" id="ENOG502SVUK">
    <property type="taxonomic scope" value="Eukaryota"/>
</dbReference>
<dbReference type="GeneTree" id="ENSGT00730000111453"/>
<dbReference type="HOGENOM" id="CLU_026298_0_0_1"/>
<dbReference type="InParanoid" id="Q8BUE7"/>
<dbReference type="OrthoDB" id="9451599at2759"/>
<dbReference type="PhylomeDB" id="Q8BUE7"/>
<dbReference type="Reactome" id="R-MMU-8851805">
    <property type="pathway name" value="MET activates RAS signaling"/>
</dbReference>
<dbReference type="Reactome" id="R-MMU-913709">
    <property type="pathway name" value="O-linked glycosylation of mucins"/>
</dbReference>
<dbReference type="Reactome" id="R-MMU-977068">
    <property type="pathway name" value="Termination of O-glycan biosynthesis"/>
</dbReference>
<dbReference type="BioGRID-ORCS" id="224116">
    <property type="hits" value="0 hits in 77 CRISPR screens"/>
</dbReference>
<dbReference type="PRO" id="PR:Q8BUE7"/>
<dbReference type="Proteomes" id="UP000000589">
    <property type="component" value="Chromosome 16"/>
</dbReference>
<dbReference type="RNAct" id="Q8BUE7">
    <property type="molecule type" value="protein"/>
</dbReference>
<dbReference type="Bgee" id="ENSMUSG00000035638">
    <property type="expression patterns" value="Expressed in lumbar subsegment of spinal cord and 51 other cell types or tissues"/>
</dbReference>
<dbReference type="ExpressionAtlas" id="Q8BUE7">
    <property type="expression patterns" value="baseline and differential"/>
</dbReference>
<dbReference type="GO" id="GO:0016324">
    <property type="term" value="C:apical plasma membrane"/>
    <property type="evidence" value="ECO:0007669"/>
    <property type="project" value="UniProtKB-SubCell"/>
</dbReference>
<dbReference type="GO" id="GO:0009925">
    <property type="term" value="C:basal plasma membrane"/>
    <property type="evidence" value="ECO:0000266"/>
    <property type="project" value="MGI"/>
</dbReference>
<dbReference type="GO" id="GO:0016323">
    <property type="term" value="C:basolateral plasma membrane"/>
    <property type="evidence" value="ECO:0007669"/>
    <property type="project" value="UniProtKB-SubCell"/>
</dbReference>
<dbReference type="GO" id="GO:0005829">
    <property type="term" value="C:cytosol"/>
    <property type="evidence" value="ECO:0000250"/>
    <property type="project" value="UniProtKB"/>
</dbReference>
<dbReference type="GO" id="GO:0005576">
    <property type="term" value="C:extracellular region"/>
    <property type="evidence" value="ECO:0007669"/>
    <property type="project" value="UniProtKB-SubCell"/>
</dbReference>
<dbReference type="GO" id="GO:0031528">
    <property type="term" value="C:microvillus membrane"/>
    <property type="evidence" value="ECO:0007669"/>
    <property type="project" value="UniProtKB-SubCell"/>
</dbReference>
<dbReference type="GO" id="GO:0005741">
    <property type="term" value="C:mitochondrial outer membrane"/>
    <property type="evidence" value="ECO:0000250"/>
    <property type="project" value="UniProtKB"/>
</dbReference>
<dbReference type="GO" id="GO:0042802">
    <property type="term" value="F:identical protein binding"/>
    <property type="evidence" value="ECO:0000266"/>
    <property type="project" value="MGI"/>
</dbReference>
<dbReference type="GO" id="GO:0048012">
    <property type="term" value="P:hepatocyte growth factor receptor signaling pathway"/>
    <property type="evidence" value="ECO:0000314"/>
    <property type="project" value="MGI"/>
</dbReference>
<dbReference type="GO" id="GO:0043065">
    <property type="term" value="P:positive regulation of apoptotic process"/>
    <property type="evidence" value="ECO:0000250"/>
    <property type="project" value="UniProtKB"/>
</dbReference>
<dbReference type="GO" id="GO:0043410">
    <property type="term" value="P:positive regulation of MAPK cascade"/>
    <property type="evidence" value="ECO:0000353"/>
    <property type="project" value="MGI"/>
</dbReference>
<dbReference type="InterPro" id="IPR034551">
    <property type="entry name" value="MUC20"/>
</dbReference>
<dbReference type="PANTHER" id="PTHR37358">
    <property type="entry name" value="MUCIN-20"/>
    <property type="match status" value="1"/>
</dbReference>
<dbReference type="PANTHER" id="PTHR37358:SF1">
    <property type="entry name" value="MUCIN-20"/>
    <property type="match status" value="1"/>
</dbReference>
<keyword id="KW-1003">Cell membrane</keyword>
<keyword id="KW-0966">Cell projection</keyword>
<keyword id="KW-0325">Glycoprotein</keyword>
<keyword id="KW-0472">Membrane</keyword>
<keyword id="KW-1185">Reference proteome</keyword>
<keyword id="KW-0677">Repeat</keyword>
<keyword id="KW-0964">Secreted</keyword>
<keyword id="KW-0732">Signal</keyword>
<proteinExistence type="evidence at protein level"/>
<gene>
    <name type="primary">Muc20</name>
</gene>
<feature type="signal peptide" evidence="2">
    <location>
        <begin position="1"/>
        <end position="21"/>
    </location>
</feature>
<feature type="chain" id="PRO_0000317470" description="Mucin-20">
    <location>
        <begin position="22"/>
        <end position="656"/>
    </location>
</feature>
<feature type="repeat" description="1">
    <location>
        <begin position="180"/>
        <end position="188"/>
    </location>
</feature>
<feature type="repeat" description="2">
    <location>
        <begin position="189"/>
        <end position="197"/>
    </location>
</feature>
<feature type="repeat" description="3">
    <location>
        <begin position="198"/>
        <end position="206"/>
    </location>
</feature>
<feature type="repeat" description="4">
    <location>
        <begin position="210"/>
        <end position="218"/>
    </location>
</feature>
<feature type="repeat" description="5">
    <location>
        <begin position="219"/>
        <end position="227"/>
    </location>
</feature>
<feature type="region of interest" description="Disordered" evidence="3">
    <location>
        <begin position="85"/>
        <end position="125"/>
    </location>
</feature>
<feature type="region of interest" description="Disordered" evidence="3">
    <location>
        <begin position="159"/>
        <end position="232"/>
    </location>
</feature>
<feature type="region of interest" description="Approximate repeats">
    <location>
        <begin position="180"/>
        <end position="227"/>
    </location>
</feature>
<feature type="region of interest" description="Disordered" evidence="3">
    <location>
        <begin position="329"/>
        <end position="348"/>
    </location>
</feature>
<feature type="region of interest" description="Involved in oligomerization" evidence="1">
    <location>
        <begin position="399"/>
        <end position="603"/>
    </location>
</feature>
<feature type="region of interest" description="Disordered" evidence="3">
    <location>
        <begin position="560"/>
        <end position="592"/>
    </location>
</feature>
<feature type="region of interest" description="Interaction with MET" evidence="1">
    <location>
        <begin position="604"/>
        <end position="656"/>
    </location>
</feature>
<feature type="compositionally biased region" description="Polar residues" evidence="3">
    <location>
        <begin position="85"/>
        <end position="96"/>
    </location>
</feature>
<feature type="compositionally biased region" description="Polar residues" evidence="3">
    <location>
        <begin position="114"/>
        <end position="125"/>
    </location>
</feature>
<feature type="compositionally biased region" description="Polar residues" evidence="3">
    <location>
        <begin position="159"/>
        <end position="170"/>
    </location>
</feature>
<feature type="compositionally biased region" description="Low complexity" evidence="3">
    <location>
        <begin position="171"/>
        <end position="227"/>
    </location>
</feature>
<feature type="compositionally biased region" description="Polar residues" evidence="3">
    <location>
        <begin position="560"/>
        <end position="573"/>
    </location>
</feature>
<feature type="glycosylation site" description="N-linked (GlcNAc...) asparagine" evidence="2">
    <location>
        <position position="366"/>
    </location>
</feature>
<feature type="glycosylation site" description="N-linked (GlcNAc...) asparagine" evidence="2">
    <location>
        <position position="570"/>
    </location>
</feature>
<feature type="sequence conflict" description="In Ref. 1; BAD06719." evidence="5" ref="1">
    <original>T</original>
    <variation>A</variation>
    <location>
        <position position="99"/>
    </location>
</feature>
<feature type="sequence conflict" description="In Ref. 1; BAD06719." evidence="5" ref="1">
    <original>T</original>
    <variation>I</variation>
    <location>
        <position position="199"/>
    </location>
</feature>
<feature type="sequence conflict" description="In Ref. 1; BAD06719." evidence="5" ref="1">
    <original>P</original>
    <variation>L</variation>
    <location>
        <position position="215"/>
    </location>
</feature>
<feature type="sequence conflict" description="In Ref. 1; BAD06719." evidence="5" ref="1">
    <original>T</original>
    <variation>A</variation>
    <location>
        <position position="219"/>
    </location>
</feature>
<feature type="sequence conflict" description="In Ref. 1; BAD06719." evidence="5" ref="1">
    <original>T</original>
    <variation>K</variation>
    <location>
        <position position="262"/>
    </location>
</feature>
<feature type="sequence conflict" description="In Ref. 1; BAD06719." evidence="5" ref="1">
    <original>A</original>
    <variation>T</variation>
    <location>
        <position position="273"/>
    </location>
</feature>
<feature type="sequence conflict" description="In Ref. 1; BAD06719." evidence="5" ref="1">
    <original>S</original>
    <variation>P</variation>
    <location>
        <position position="293"/>
    </location>
</feature>
<feature type="sequence conflict" description="In Ref. 1; BAD06719." evidence="5" ref="1">
    <original>V</original>
    <variation>I</variation>
    <location>
        <position position="297"/>
    </location>
</feature>
<feature type="sequence conflict" description="In Ref. 1; BAD06719." evidence="5" ref="1">
    <original>Y</original>
    <variation>H</variation>
    <location>
        <position position="329"/>
    </location>
</feature>
<feature type="sequence conflict" description="In Ref. 1; BAD06719." evidence="5" ref="1">
    <original>N</original>
    <variation>T</variation>
    <location>
        <position position="374"/>
    </location>
</feature>
<feature type="sequence conflict" description="In Ref. 1; BAD06719." evidence="5" ref="1">
    <original>A</original>
    <variation>V</variation>
    <location>
        <position position="391"/>
    </location>
</feature>
<feature type="sequence conflict" description="In Ref. 1; BAD06719." evidence="5" ref="1">
    <original>A</original>
    <variation>T</variation>
    <location>
        <position position="509"/>
    </location>
</feature>